<name>DAPB1_RHILO</name>
<proteinExistence type="inferred from homology"/>
<keyword id="KW-0028">Amino-acid biosynthesis</keyword>
<keyword id="KW-0963">Cytoplasm</keyword>
<keyword id="KW-0220">Diaminopimelate biosynthesis</keyword>
<keyword id="KW-0457">Lysine biosynthesis</keyword>
<keyword id="KW-0520">NAD</keyword>
<keyword id="KW-0521">NADP</keyword>
<keyword id="KW-0560">Oxidoreductase</keyword>
<comment type="function">
    <text evidence="1">Catalyzes the conversion of 4-hydroxy-tetrahydrodipicolinate (HTPA) to tetrahydrodipicolinate.</text>
</comment>
<comment type="catalytic activity">
    <reaction evidence="1">
        <text>(S)-2,3,4,5-tetrahydrodipicolinate + NAD(+) + H2O = (2S,4S)-4-hydroxy-2,3,4,5-tetrahydrodipicolinate + NADH + H(+)</text>
        <dbReference type="Rhea" id="RHEA:35323"/>
        <dbReference type="ChEBI" id="CHEBI:15377"/>
        <dbReference type="ChEBI" id="CHEBI:15378"/>
        <dbReference type="ChEBI" id="CHEBI:16845"/>
        <dbReference type="ChEBI" id="CHEBI:57540"/>
        <dbReference type="ChEBI" id="CHEBI:57945"/>
        <dbReference type="ChEBI" id="CHEBI:67139"/>
        <dbReference type="EC" id="1.17.1.8"/>
    </reaction>
</comment>
<comment type="catalytic activity">
    <reaction evidence="1">
        <text>(S)-2,3,4,5-tetrahydrodipicolinate + NADP(+) + H2O = (2S,4S)-4-hydroxy-2,3,4,5-tetrahydrodipicolinate + NADPH + H(+)</text>
        <dbReference type="Rhea" id="RHEA:35331"/>
        <dbReference type="ChEBI" id="CHEBI:15377"/>
        <dbReference type="ChEBI" id="CHEBI:15378"/>
        <dbReference type="ChEBI" id="CHEBI:16845"/>
        <dbReference type="ChEBI" id="CHEBI:57783"/>
        <dbReference type="ChEBI" id="CHEBI:58349"/>
        <dbReference type="ChEBI" id="CHEBI:67139"/>
        <dbReference type="EC" id="1.17.1.8"/>
    </reaction>
</comment>
<comment type="pathway">
    <text evidence="1">Amino-acid biosynthesis; L-lysine biosynthesis via DAP pathway; (S)-tetrahydrodipicolinate from L-aspartate: step 4/4.</text>
</comment>
<comment type="subcellular location">
    <subcellularLocation>
        <location evidence="1">Cytoplasm</location>
    </subcellularLocation>
</comment>
<comment type="similarity">
    <text evidence="1">Belongs to the DapB family.</text>
</comment>
<comment type="caution">
    <text evidence="2">Was originally thought to be a dihydrodipicolinate reductase (DHDPR), catalyzing the conversion of dihydrodipicolinate to tetrahydrodipicolinate. However, it was shown in E.coli that the substrate of the enzymatic reaction is not dihydrodipicolinate (DHDP) but in fact (2S,4S)-4-hydroxy-2,3,4,5-tetrahydrodipicolinic acid (HTPA), the product released by the DapA-catalyzed reaction.</text>
</comment>
<dbReference type="EC" id="1.17.1.8" evidence="1"/>
<dbReference type="EMBL" id="BA000012">
    <property type="protein sequence ID" value="BAB51250.1"/>
    <property type="molecule type" value="Genomic_DNA"/>
</dbReference>
<dbReference type="SMR" id="P58210"/>
<dbReference type="KEGG" id="mlo:mlr4642"/>
<dbReference type="eggNOG" id="COG0289">
    <property type="taxonomic scope" value="Bacteria"/>
</dbReference>
<dbReference type="HOGENOM" id="CLU_047479_2_1_5"/>
<dbReference type="UniPathway" id="UPA00034">
    <property type="reaction ID" value="UER00018"/>
</dbReference>
<dbReference type="Proteomes" id="UP000000552">
    <property type="component" value="Chromosome"/>
</dbReference>
<dbReference type="GO" id="GO:0005829">
    <property type="term" value="C:cytosol"/>
    <property type="evidence" value="ECO:0007669"/>
    <property type="project" value="TreeGrafter"/>
</dbReference>
<dbReference type="GO" id="GO:0008839">
    <property type="term" value="F:4-hydroxy-tetrahydrodipicolinate reductase"/>
    <property type="evidence" value="ECO:0007669"/>
    <property type="project" value="UniProtKB-EC"/>
</dbReference>
<dbReference type="GO" id="GO:0051287">
    <property type="term" value="F:NAD binding"/>
    <property type="evidence" value="ECO:0007669"/>
    <property type="project" value="UniProtKB-UniRule"/>
</dbReference>
<dbReference type="GO" id="GO:0050661">
    <property type="term" value="F:NADP binding"/>
    <property type="evidence" value="ECO:0007669"/>
    <property type="project" value="UniProtKB-UniRule"/>
</dbReference>
<dbReference type="GO" id="GO:0016726">
    <property type="term" value="F:oxidoreductase activity, acting on CH or CH2 groups, NAD or NADP as acceptor"/>
    <property type="evidence" value="ECO:0007669"/>
    <property type="project" value="UniProtKB-UniRule"/>
</dbReference>
<dbReference type="GO" id="GO:0019877">
    <property type="term" value="P:diaminopimelate biosynthetic process"/>
    <property type="evidence" value="ECO:0007669"/>
    <property type="project" value="UniProtKB-UniRule"/>
</dbReference>
<dbReference type="GO" id="GO:0009089">
    <property type="term" value="P:lysine biosynthetic process via diaminopimelate"/>
    <property type="evidence" value="ECO:0007669"/>
    <property type="project" value="UniProtKB-UniRule"/>
</dbReference>
<dbReference type="CDD" id="cd02274">
    <property type="entry name" value="DHDPR_N"/>
    <property type="match status" value="1"/>
</dbReference>
<dbReference type="FunFam" id="3.30.360.10:FF:000004">
    <property type="entry name" value="4-hydroxy-tetrahydrodipicolinate reductase"/>
    <property type="match status" value="1"/>
</dbReference>
<dbReference type="Gene3D" id="3.30.360.10">
    <property type="entry name" value="Dihydrodipicolinate Reductase, domain 2"/>
    <property type="match status" value="1"/>
</dbReference>
<dbReference type="Gene3D" id="3.40.50.720">
    <property type="entry name" value="NAD(P)-binding Rossmann-like Domain"/>
    <property type="match status" value="1"/>
</dbReference>
<dbReference type="HAMAP" id="MF_00102">
    <property type="entry name" value="DapB"/>
    <property type="match status" value="1"/>
</dbReference>
<dbReference type="InterPro" id="IPR022663">
    <property type="entry name" value="DapB_C"/>
</dbReference>
<dbReference type="InterPro" id="IPR000846">
    <property type="entry name" value="DapB_N"/>
</dbReference>
<dbReference type="InterPro" id="IPR022664">
    <property type="entry name" value="DapB_N_CS"/>
</dbReference>
<dbReference type="InterPro" id="IPR023940">
    <property type="entry name" value="DHDPR_bac"/>
</dbReference>
<dbReference type="InterPro" id="IPR036291">
    <property type="entry name" value="NAD(P)-bd_dom_sf"/>
</dbReference>
<dbReference type="NCBIfam" id="TIGR00036">
    <property type="entry name" value="dapB"/>
    <property type="match status" value="1"/>
</dbReference>
<dbReference type="PANTHER" id="PTHR20836:SF0">
    <property type="entry name" value="4-HYDROXY-TETRAHYDRODIPICOLINATE REDUCTASE 1, CHLOROPLASTIC-RELATED"/>
    <property type="match status" value="1"/>
</dbReference>
<dbReference type="PANTHER" id="PTHR20836">
    <property type="entry name" value="DIHYDRODIPICOLINATE REDUCTASE"/>
    <property type="match status" value="1"/>
</dbReference>
<dbReference type="Pfam" id="PF05173">
    <property type="entry name" value="DapB_C"/>
    <property type="match status" value="1"/>
</dbReference>
<dbReference type="Pfam" id="PF01113">
    <property type="entry name" value="DapB_N"/>
    <property type="match status" value="1"/>
</dbReference>
<dbReference type="PIRSF" id="PIRSF000161">
    <property type="entry name" value="DHPR"/>
    <property type="match status" value="1"/>
</dbReference>
<dbReference type="SUPFAM" id="SSF55347">
    <property type="entry name" value="Glyceraldehyde-3-phosphate dehydrogenase-like, C-terminal domain"/>
    <property type="match status" value="1"/>
</dbReference>
<dbReference type="SUPFAM" id="SSF51735">
    <property type="entry name" value="NAD(P)-binding Rossmann-fold domains"/>
    <property type="match status" value="1"/>
</dbReference>
<dbReference type="PROSITE" id="PS01298">
    <property type="entry name" value="DAPB"/>
    <property type="match status" value="1"/>
</dbReference>
<accession>P58210</accession>
<protein>
    <recommendedName>
        <fullName evidence="1">4-hydroxy-tetrahydrodipicolinate reductase 1</fullName>
        <shortName evidence="1">HTPA reductase 1</shortName>
        <ecNumber evidence="1">1.17.1.8</ecNumber>
    </recommendedName>
</protein>
<evidence type="ECO:0000255" key="1">
    <source>
        <dbReference type="HAMAP-Rule" id="MF_00102"/>
    </source>
</evidence>
<evidence type="ECO:0000305" key="2"/>
<organism>
    <name type="scientific">Mesorhizobium japonicum (strain LMG 29417 / CECT 9101 / MAFF 303099)</name>
    <name type="common">Mesorhizobium loti (strain MAFF 303099)</name>
    <dbReference type="NCBI Taxonomy" id="266835"/>
    <lineage>
        <taxon>Bacteria</taxon>
        <taxon>Pseudomonadati</taxon>
        <taxon>Pseudomonadota</taxon>
        <taxon>Alphaproteobacteria</taxon>
        <taxon>Hyphomicrobiales</taxon>
        <taxon>Phyllobacteriaceae</taxon>
        <taxon>Mesorhizobium</taxon>
    </lineage>
</organism>
<reference key="1">
    <citation type="journal article" date="2000" name="DNA Res.">
        <title>Complete genome structure of the nitrogen-fixing symbiotic bacterium Mesorhizobium loti.</title>
        <authorList>
            <person name="Kaneko T."/>
            <person name="Nakamura Y."/>
            <person name="Sato S."/>
            <person name="Asamizu E."/>
            <person name="Kato T."/>
            <person name="Sasamoto S."/>
            <person name="Watanabe A."/>
            <person name="Idesawa K."/>
            <person name="Ishikawa A."/>
            <person name="Kawashima K."/>
            <person name="Kimura T."/>
            <person name="Kishida Y."/>
            <person name="Kiyokawa C."/>
            <person name="Kohara M."/>
            <person name="Matsumoto M."/>
            <person name="Matsuno A."/>
            <person name="Mochizuki Y."/>
            <person name="Nakayama S."/>
            <person name="Nakazaki N."/>
            <person name="Shimpo S."/>
            <person name="Sugimoto M."/>
            <person name="Takeuchi C."/>
            <person name="Yamada M."/>
            <person name="Tabata S."/>
        </authorList>
    </citation>
    <scope>NUCLEOTIDE SEQUENCE [LARGE SCALE GENOMIC DNA]</scope>
    <source>
        <strain>LMG 29417 / CECT 9101 / MAFF 303099</strain>
    </source>
</reference>
<sequence>MSEAGDMGLVVVGAAGRMGQTLIRAIHTIPGARVIGAVERADSPHLGKDAGELAGIGIINVPIGDDPLPVFAKADGVLDFTTPASSVEFAGYAAQARIVHVIGTTGCSADDNARIAAAARHATIVKSGNMSLGVNLLAVLVEQAARALDADDFDIEILEMHHKHKVDAPSGTALLLGEAAAAGRGIALAGNDVRSRDGHTGVRKTGSIGFATLRGGSVVGDHSVILAGTGERITLSHHAEDRAIFARGAVKAALWARGKKPGLYSMRDVLGLS</sequence>
<feature type="chain" id="PRO_0000141474" description="4-hydroxy-tetrahydrodipicolinate reductase 1">
    <location>
        <begin position="1"/>
        <end position="273"/>
    </location>
</feature>
<feature type="active site" description="Proton donor/acceptor" evidence="1">
    <location>
        <position position="161"/>
    </location>
</feature>
<feature type="active site" description="Proton donor" evidence="1">
    <location>
        <position position="165"/>
    </location>
</feature>
<feature type="binding site" evidence="1">
    <location>
        <begin position="13"/>
        <end position="18"/>
    </location>
    <ligand>
        <name>NAD(+)</name>
        <dbReference type="ChEBI" id="CHEBI:57540"/>
    </ligand>
</feature>
<feature type="binding site" evidence="1">
    <location>
        <position position="39"/>
    </location>
    <ligand>
        <name>NAD(+)</name>
        <dbReference type="ChEBI" id="CHEBI:57540"/>
    </ligand>
</feature>
<feature type="binding site" evidence="1">
    <location>
        <position position="40"/>
    </location>
    <ligand>
        <name>NADP(+)</name>
        <dbReference type="ChEBI" id="CHEBI:58349"/>
    </ligand>
</feature>
<feature type="binding site" evidence="1">
    <location>
        <begin position="103"/>
        <end position="105"/>
    </location>
    <ligand>
        <name>NAD(+)</name>
        <dbReference type="ChEBI" id="CHEBI:57540"/>
    </ligand>
</feature>
<feature type="binding site" evidence="1">
    <location>
        <begin position="127"/>
        <end position="130"/>
    </location>
    <ligand>
        <name>NAD(+)</name>
        <dbReference type="ChEBI" id="CHEBI:57540"/>
    </ligand>
</feature>
<feature type="binding site" evidence="1">
    <location>
        <position position="162"/>
    </location>
    <ligand>
        <name>(S)-2,3,4,5-tetrahydrodipicolinate</name>
        <dbReference type="ChEBI" id="CHEBI:16845"/>
    </ligand>
</feature>
<feature type="binding site" evidence="1">
    <location>
        <begin position="171"/>
        <end position="172"/>
    </location>
    <ligand>
        <name>(S)-2,3,4,5-tetrahydrodipicolinate</name>
        <dbReference type="ChEBI" id="CHEBI:16845"/>
    </ligand>
</feature>
<gene>
    <name evidence="1" type="primary">dapB1</name>
    <name type="ordered locus">mlr4642</name>
</gene>